<reference key="1">
    <citation type="submission" date="2003-09" db="EMBL/GenBank/DDBJ databases">
        <authorList>
            <consortium name="NIH - Xenopus Gene Collection (XGC) project"/>
        </authorList>
    </citation>
    <scope>NUCLEOTIDE SEQUENCE [LARGE SCALE MRNA]</scope>
    <source>
        <tissue>Ovary</tissue>
    </source>
</reference>
<name>SYMC_XENLA</name>
<evidence type="ECO:0000250" key="1"/>
<evidence type="ECO:0000250" key="2">
    <source>
        <dbReference type="UniProtKB" id="P56192"/>
    </source>
</evidence>
<evidence type="ECO:0000256" key="3">
    <source>
        <dbReference type="SAM" id="MobiDB-lite"/>
    </source>
</evidence>
<evidence type="ECO:0000305" key="4"/>
<organism>
    <name type="scientific">Xenopus laevis</name>
    <name type="common">African clawed frog</name>
    <dbReference type="NCBI Taxonomy" id="8355"/>
    <lineage>
        <taxon>Eukaryota</taxon>
        <taxon>Metazoa</taxon>
        <taxon>Chordata</taxon>
        <taxon>Craniata</taxon>
        <taxon>Vertebrata</taxon>
        <taxon>Euteleostomi</taxon>
        <taxon>Amphibia</taxon>
        <taxon>Batrachia</taxon>
        <taxon>Anura</taxon>
        <taxon>Pipoidea</taxon>
        <taxon>Pipidae</taxon>
        <taxon>Xenopodinae</taxon>
        <taxon>Xenopus</taxon>
        <taxon>Xenopus</taxon>
    </lineage>
</organism>
<keyword id="KW-0030">Aminoacyl-tRNA synthetase</keyword>
<keyword id="KW-0067">ATP-binding</keyword>
<keyword id="KW-0963">Cytoplasm</keyword>
<keyword id="KW-0436">Ligase</keyword>
<keyword id="KW-0547">Nucleotide-binding</keyword>
<keyword id="KW-0539">Nucleus</keyword>
<keyword id="KW-0648">Protein biosynthesis</keyword>
<keyword id="KW-1185">Reference proteome</keyword>
<keyword id="KW-0694">RNA-binding</keyword>
<keyword id="KW-0820">tRNA-binding</keyword>
<accession>Q6PF21</accession>
<sequence>MKLFVGEGNPQGVKVLAAAALWAQHVQIDRLQQEEKIVPFMSQPRLPVLDLENGNYLFLSNAICRYFYLSSGHDMCDLSNQWLEWEAAELQPALSAALYAHVVQGKKKEDVMATISASLKHLDQSLAGKSSPYLIKDALTVVDIVVWGSIYPLIVDASNLPEEMASLKRWFQNVSQLEQCQKAASSLLKDKGSSVFKPFLQKQPAPITPPGKSVCKEQEGEDMPSLSEEDIQAAAEAWAKGLTGASKPKQRPHPILPVEGEKNVLITSALPYVNNVPHLGNIIGSVLSADVFARYCRLRNWNTLYICGTDEYGTATETKAMEEGLTPQQICDKYNAIHTAIYQWFNISFDYFGRTTTQHQTTISQDIFHRLLEREFLLTDTVEQLRCEKCQRFLADRFVEGICPFCNYEEARGDQCDKCGKLINAVELKKPQCKICKQSPVIKSSKHLFLDLPKLEKRLEQWLEQSFSTGDWTSNARFITRSWIRDGLKPRCITRDLKWGTPVPLDGFRDKVFYVWFDAPIGYISITANYTDQWEKWWKSPQQVQLYNFMAKDNVPFHSVVFPSCLLGAEDNYTLVNHLVATEYLNYEDGKFSKSRGVGVFGDMAKDTGIPADIWRFYLLYVRPEGQDSAFSWSDLMLKNNSELLNNLGNFVNRAGMFVQKFFNGCVPEMELLSEDKRLLAQVAAELQQYNLLLEKVRIRDALRCILNISRHGNQYIQVNEPWKCIKGNQQEQKRAGTVTGVAVNMAALLSIMLHPYMPTISSVIQEQLLMPQESKVLTTDFCCCLQSGHQIGNVSPLFQKLENDQIESLRKRFGGGQVKTESKVSPSQEAPEQQAPKASGPERVKELMQELEKQGNHVRELKGKKAEKSVIDPEVQKLLALKKELALAEGKSPDPPTQKGKKKK</sequence>
<protein>
    <recommendedName>
        <fullName>Methionine--tRNA ligase, cytoplasmic</fullName>
        <ecNumber evidence="2">6.1.1.10</ecNumber>
    </recommendedName>
    <alternativeName>
        <fullName>Methionyl-tRNA synthetase</fullName>
        <shortName>MetRS</shortName>
    </alternativeName>
</protein>
<comment type="function">
    <text evidence="2">Catalyzes the specific attachment of an amino acid to its cognate tRNA in a 2 step reaction: the amino acid (AA) is first activated by ATP to form AA-AMP and then transferred to the acceptor end of the tRNA. Plays a role in the synthesis of ribosomal RNA in the nucleolus.</text>
</comment>
<comment type="catalytic activity">
    <reaction evidence="2">
        <text>tRNA(Met) + L-methionine + ATP = L-methionyl-tRNA(Met) + AMP + diphosphate</text>
        <dbReference type="Rhea" id="RHEA:13481"/>
        <dbReference type="Rhea" id="RHEA-COMP:9667"/>
        <dbReference type="Rhea" id="RHEA-COMP:9698"/>
        <dbReference type="ChEBI" id="CHEBI:30616"/>
        <dbReference type="ChEBI" id="CHEBI:33019"/>
        <dbReference type="ChEBI" id="CHEBI:57844"/>
        <dbReference type="ChEBI" id="CHEBI:78442"/>
        <dbReference type="ChEBI" id="CHEBI:78530"/>
        <dbReference type="ChEBI" id="CHEBI:456215"/>
        <dbReference type="EC" id="6.1.1.10"/>
    </reaction>
</comment>
<comment type="subunit">
    <text evidence="2">Monomer. Part of a multisubunit complex that groups tRNA ligases for Arg (RARS1), Asp (DARS1), Gln (QARS1), Ile (IARS1), Leu (LARS1), Lys (KARS1), Met (MARS1) the bifunctional ligase for Glu and Pro (EPRS1) and the auxiliary subunits AIMP1/p43, AIMP2/p38 and EEF1E1/p18.</text>
</comment>
<comment type="subcellular location">
    <subcellularLocation>
        <location evidence="2">Cytoplasm</location>
        <location evidence="2">Cytosol</location>
    </subcellularLocation>
    <subcellularLocation>
        <location evidence="2">Nucleus</location>
        <location evidence="2">Nucleolus</location>
    </subcellularLocation>
    <text evidence="2">Localizes to the nucleolus in proliferative cells but disappears in quiescent cells.</text>
</comment>
<comment type="similarity">
    <text evidence="4">Belongs to the class-I aminoacyl-tRNA synthetase family.</text>
</comment>
<proteinExistence type="evidence at transcript level"/>
<feature type="chain" id="PRO_0000139264" description="Methionine--tRNA ligase, cytoplasmic">
    <location>
        <begin position="1"/>
        <end position="905"/>
    </location>
</feature>
<feature type="domain" description="GST N-terminal">
    <location>
        <begin position="1"/>
        <end position="75"/>
    </location>
</feature>
<feature type="domain" description="GST C-terminal">
    <location>
        <begin position="72"/>
        <end position="199"/>
    </location>
</feature>
<feature type="domain" description="WHEP-TRS">
    <location>
        <begin position="844"/>
        <end position="900"/>
    </location>
</feature>
<feature type="region of interest" description="Disordered" evidence="3">
    <location>
        <begin position="813"/>
        <end position="874"/>
    </location>
</feature>
<feature type="region of interest" description="Disordered" evidence="3">
    <location>
        <begin position="886"/>
        <end position="905"/>
    </location>
</feature>
<feature type="short sequence motif" description="'HIGH' region">
    <location>
        <begin position="271"/>
        <end position="281"/>
    </location>
</feature>
<feature type="short sequence motif" description="'KMSKS' region">
    <location>
        <begin position="591"/>
        <end position="595"/>
    </location>
</feature>
<feature type="compositionally biased region" description="Basic and acidic residues" evidence="3">
    <location>
        <begin position="841"/>
        <end position="874"/>
    </location>
</feature>
<feature type="binding site" evidence="1">
    <location>
        <position position="594"/>
    </location>
    <ligand>
        <name>ATP</name>
        <dbReference type="ChEBI" id="CHEBI:30616"/>
    </ligand>
</feature>
<gene>
    <name type="primary">mars1</name>
    <name type="synonym">mars</name>
</gene>
<dbReference type="EC" id="6.1.1.10" evidence="2"/>
<dbReference type="EMBL" id="BC057757">
    <property type="protein sequence ID" value="AAH57757.1"/>
    <property type="molecule type" value="mRNA"/>
</dbReference>
<dbReference type="RefSeq" id="NP_001079984.1">
    <property type="nucleotide sequence ID" value="NM_001086515.1"/>
</dbReference>
<dbReference type="SMR" id="Q6PF21"/>
<dbReference type="IntAct" id="Q6PF21">
    <property type="interactions" value="1"/>
</dbReference>
<dbReference type="DNASU" id="379675"/>
<dbReference type="GeneID" id="379675"/>
<dbReference type="KEGG" id="xla:379675"/>
<dbReference type="AGR" id="Xenbase:XB-GENE-17340220"/>
<dbReference type="CTD" id="379675"/>
<dbReference type="Xenbase" id="XB-GENE-17340220">
    <property type="gene designation" value="mars1.S"/>
</dbReference>
<dbReference type="OrthoDB" id="5844513at2759"/>
<dbReference type="Proteomes" id="UP000186698">
    <property type="component" value="Chromosome 2S"/>
</dbReference>
<dbReference type="Bgee" id="379675">
    <property type="expression patterns" value="Expressed in zone of skin and 20 other cell types or tissues"/>
</dbReference>
<dbReference type="GO" id="GO:0017101">
    <property type="term" value="C:aminoacyl-tRNA synthetase multienzyme complex"/>
    <property type="evidence" value="ECO:0000250"/>
    <property type="project" value="UniProtKB"/>
</dbReference>
<dbReference type="GO" id="GO:0005829">
    <property type="term" value="C:cytosol"/>
    <property type="evidence" value="ECO:0000318"/>
    <property type="project" value="GO_Central"/>
</dbReference>
<dbReference type="GO" id="GO:0005730">
    <property type="term" value="C:nucleolus"/>
    <property type="evidence" value="ECO:0007669"/>
    <property type="project" value="UniProtKB-SubCell"/>
</dbReference>
<dbReference type="GO" id="GO:0005524">
    <property type="term" value="F:ATP binding"/>
    <property type="evidence" value="ECO:0007669"/>
    <property type="project" value="UniProtKB-KW"/>
</dbReference>
<dbReference type="GO" id="GO:0004825">
    <property type="term" value="F:methionine-tRNA ligase activity"/>
    <property type="evidence" value="ECO:0000250"/>
    <property type="project" value="UniProtKB"/>
</dbReference>
<dbReference type="GO" id="GO:0000049">
    <property type="term" value="F:tRNA binding"/>
    <property type="evidence" value="ECO:0007669"/>
    <property type="project" value="UniProtKB-KW"/>
</dbReference>
<dbReference type="GO" id="GO:0006431">
    <property type="term" value="P:methionyl-tRNA aminoacylation"/>
    <property type="evidence" value="ECO:0000250"/>
    <property type="project" value="UniProtKB"/>
</dbReference>
<dbReference type="CDD" id="cd07957">
    <property type="entry name" value="Anticodon_Ia_Met"/>
    <property type="match status" value="1"/>
</dbReference>
<dbReference type="CDD" id="cd10307">
    <property type="entry name" value="GST_C_MetRS_N"/>
    <property type="match status" value="1"/>
</dbReference>
<dbReference type="CDD" id="cd00814">
    <property type="entry name" value="MetRS_core"/>
    <property type="match status" value="1"/>
</dbReference>
<dbReference type="CDD" id="cd00939">
    <property type="entry name" value="MetRS_RNA"/>
    <property type="match status" value="1"/>
</dbReference>
<dbReference type="FunFam" id="2.20.28.20:FF:000001">
    <property type="entry name" value="Methionine--tRNA ligase"/>
    <property type="match status" value="1"/>
</dbReference>
<dbReference type="FunFam" id="1.10.287.10:FF:000009">
    <property type="entry name" value="Methionine--tRNA ligase, cytoplasmic"/>
    <property type="match status" value="1"/>
</dbReference>
<dbReference type="FunFam" id="1.20.1050.10:FF:000026">
    <property type="entry name" value="Methionine--tRNA ligase, cytoplasmic"/>
    <property type="match status" value="1"/>
</dbReference>
<dbReference type="FunFam" id="1.10.730.10:FF:000010">
    <property type="entry name" value="methionine--tRNA ligase, cytoplasmic"/>
    <property type="match status" value="1"/>
</dbReference>
<dbReference type="FunFam" id="3.40.30.10:FF:000136">
    <property type="entry name" value="methionine--tRNA ligase, cytoplasmic"/>
    <property type="match status" value="1"/>
</dbReference>
<dbReference type="FunFam" id="3.40.50.620:FF:000640">
    <property type="entry name" value="Uncharacterized protein"/>
    <property type="match status" value="1"/>
</dbReference>
<dbReference type="Gene3D" id="1.20.1050.10">
    <property type="match status" value="1"/>
</dbReference>
<dbReference type="Gene3D" id="3.40.30.10">
    <property type="entry name" value="Glutaredoxin"/>
    <property type="match status" value="1"/>
</dbReference>
<dbReference type="Gene3D" id="3.40.50.620">
    <property type="entry name" value="HUPs"/>
    <property type="match status" value="1"/>
</dbReference>
<dbReference type="Gene3D" id="1.10.730.10">
    <property type="entry name" value="Isoleucyl-tRNA Synthetase, Domain 1"/>
    <property type="match status" value="1"/>
</dbReference>
<dbReference type="Gene3D" id="2.20.28.20">
    <property type="entry name" value="Methionyl-tRNA synthetase, Zn-domain"/>
    <property type="match status" value="1"/>
</dbReference>
<dbReference type="Gene3D" id="1.10.287.10">
    <property type="entry name" value="S15/NS1, RNA-binding"/>
    <property type="match status" value="1"/>
</dbReference>
<dbReference type="HAMAP" id="MF_00098">
    <property type="entry name" value="Met_tRNA_synth_type1"/>
    <property type="match status" value="1"/>
</dbReference>
<dbReference type="InterPro" id="IPR001412">
    <property type="entry name" value="aa-tRNA-synth_I_CS"/>
</dbReference>
<dbReference type="InterPro" id="IPR041872">
    <property type="entry name" value="Anticodon_Met"/>
</dbReference>
<dbReference type="InterPro" id="IPR010987">
    <property type="entry name" value="Glutathione-S-Trfase_C-like"/>
</dbReference>
<dbReference type="InterPro" id="IPR036282">
    <property type="entry name" value="Glutathione-S-Trfase_C_sf"/>
</dbReference>
<dbReference type="InterPro" id="IPR004046">
    <property type="entry name" value="GST_C"/>
</dbReference>
<dbReference type="InterPro" id="IPR041598">
    <property type="entry name" value="MARS_N"/>
</dbReference>
<dbReference type="InterPro" id="IPR023458">
    <property type="entry name" value="Met-tRNA_ligase_1"/>
</dbReference>
<dbReference type="InterPro" id="IPR014758">
    <property type="entry name" value="Met-tRNA_synth"/>
</dbReference>
<dbReference type="InterPro" id="IPR015413">
    <property type="entry name" value="Methionyl/Leucyl_tRNA_Synth"/>
</dbReference>
<dbReference type="InterPro" id="IPR033911">
    <property type="entry name" value="MetRS_core"/>
</dbReference>
<dbReference type="InterPro" id="IPR029038">
    <property type="entry name" value="MetRS_Zn"/>
</dbReference>
<dbReference type="InterPro" id="IPR014729">
    <property type="entry name" value="Rossmann-like_a/b/a_fold"/>
</dbReference>
<dbReference type="InterPro" id="IPR009080">
    <property type="entry name" value="tRNAsynth_Ia_anticodon-bd"/>
</dbReference>
<dbReference type="InterPro" id="IPR009068">
    <property type="entry name" value="uS15_NS1_RNA-bd_sf"/>
</dbReference>
<dbReference type="InterPro" id="IPR000738">
    <property type="entry name" value="WHEP-TRS_dom"/>
</dbReference>
<dbReference type="NCBIfam" id="TIGR00398">
    <property type="entry name" value="metG"/>
    <property type="match status" value="1"/>
</dbReference>
<dbReference type="NCBIfam" id="NF001100">
    <property type="entry name" value="PRK00133.1"/>
    <property type="match status" value="1"/>
</dbReference>
<dbReference type="PANTHER" id="PTHR45765">
    <property type="entry name" value="METHIONINE--TRNA LIGASE"/>
    <property type="match status" value="1"/>
</dbReference>
<dbReference type="PANTHER" id="PTHR45765:SF1">
    <property type="entry name" value="METHIONINE--TRNA LIGASE, CYTOPLASMIC"/>
    <property type="match status" value="1"/>
</dbReference>
<dbReference type="Pfam" id="PF19303">
    <property type="entry name" value="Anticodon_3"/>
    <property type="match status" value="1"/>
</dbReference>
<dbReference type="Pfam" id="PF14497">
    <property type="entry name" value="GST_C_3"/>
    <property type="match status" value="1"/>
</dbReference>
<dbReference type="Pfam" id="PF18485">
    <property type="entry name" value="GST_N_5"/>
    <property type="match status" value="1"/>
</dbReference>
<dbReference type="Pfam" id="PF09334">
    <property type="entry name" value="tRNA-synt_1g"/>
    <property type="match status" value="1"/>
</dbReference>
<dbReference type="Pfam" id="PF00458">
    <property type="entry name" value="WHEP-TRS"/>
    <property type="match status" value="1"/>
</dbReference>
<dbReference type="PRINTS" id="PR01041">
    <property type="entry name" value="TRNASYNTHMET"/>
</dbReference>
<dbReference type="SMART" id="SM00991">
    <property type="entry name" value="WHEP-TRS"/>
    <property type="match status" value="1"/>
</dbReference>
<dbReference type="SUPFAM" id="SSF47323">
    <property type="entry name" value="Anticodon-binding domain of a subclass of class I aminoacyl-tRNA synthetases"/>
    <property type="match status" value="1"/>
</dbReference>
<dbReference type="SUPFAM" id="SSF47616">
    <property type="entry name" value="GST C-terminal domain-like"/>
    <property type="match status" value="1"/>
</dbReference>
<dbReference type="SUPFAM" id="SSF57770">
    <property type="entry name" value="Methionyl-tRNA synthetase (MetRS), Zn-domain"/>
    <property type="match status" value="1"/>
</dbReference>
<dbReference type="SUPFAM" id="SSF52374">
    <property type="entry name" value="Nucleotidylyl transferase"/>
    <property type="match status" value="1"/>
</dbReference>
<dbReference type="SUPFAM" id="SSF47060">
    <property type="entry name" value="S15/NS1 RNA-binding domain"/>
    <property type="match status" value="1"/>
</dbReference>
<dbReference type="PROSITE" id="PS00178">
    <property type="entry name" value="AA_TRNA_LIGASE_I"/>
    <property type="match status" value="1"/>
</dbReference>
<dbReference type="PROSITE" id="PS50405">
    <property type="entry name" value="GST_CTER"/>
    <property type="match status" value="1"/>
</dbReference>
<dbReference type="PROSITE" id="PS50404">
    <property type="entry name" value="GST_NTER"/>
    <property type="match status" value="1"/>
</dbReference>
<dbReference type="PROSITE" id="PS00762">
    <property type="entry name" value="WHEP_TRS_1"/>
    <property type="match status" value="1"/>
</dbReference>
<dbReference type="PROSITE" id="PS51185">
    <property type="entry name" value="WHEP_TRS_2"/>
    <property type="match status" value="1"/>
</dbReference>